<protein>
    <recommendedName>
        <fullName>Tubulin alpha-2 chain</fullName>
        <ecNumber evidence="2">3.6.5.-</ecNumber>
    </recommendedName>
    <alternativeName>
        <fullName>Alpha-2-tubulin</fullName>
    </alternativeName>
</protein>
<evidence type="ECO:0000250" key="1"/>
<evidence type="ECO:0000250" key="2">
    <source>
        <dbReference type="UniProtKB" id="P68363"/>
    </source>
</evidence>
<evidence type="ECO:0000305" key="3"/>
<sequence>MREIISIHIGQAGIQVGNSCWELYCLEHGIQPDGLMPSDTSLGVARDAFNTFFSETGAGKHVPRALFVDLEPTVIDEVKTGPYRQLFHPEQLISYKEDAANNFARGHYTVGREIVDPCLDRIRKLADNCTGLQGFLVFNAVGGGTGSGLGSLLLERLSVDYGRKSKLGFTIYPSPQISTAVVEPYNSVLSTHSLIEHTDVVVLLDNEAIYDICKRSLDIERPTYTNLNRLISQVISSLTTSLRFDGAINVDITEFQTNLVPYPRIHFMLSSYAPIISVEKAYHEQHSVPEITNSVFESSSVMAKCDPRHGKYMACCLMYRGDVVPKDVNAAVHSIKTKRTVQFVDWCPTGFKCGINYQPPTVVPGGDLAKVQRAVCMISNNTAVAEVFSRIDRKFDLMYAKRAFVHWYVGEGMEEGEFSEAREDLAALEKDYEEVGAEVEEDDEEEY</sequence>
<feature type="chain" id="PRO_0000048163" description="Tubulin alpha-2 chain">
    <location>
        <begin position="1"/>
        <end position="447"/>
    </location>
</feature>
<feature type="active site" evidence="2">
    <location>
        <position position="254"/>
    </location>
</feature>
<feature type="binding site" evidence="2">
    <location>
        <position position="11"/>
    </location>
    <ligand>
        <name>GTP</name>
        <dbReference type="ChEBI" id="CHEBI:37565"/>
    </ligand>
</feature>
<feature type="binding site" evidence="2">
    <location>
        <position position="71"/>
    </location>
    <ligand>
        <name>GTP</name>
        <dbReference type="ChEBI" id="CHEBI:37565"/>
    </ligand>
</feature>
<feature type="binding site" evidence="2">
    <location>
        <position position="71"/>
    </location>
    <ligand>
        <name>Mg(2+)</name>
        <dbReference type="ChEBI" id="CHEBI:18420"/>
    </ligand>
</feature>
<feature type="binding site" evidence="2">
    <location>
        <position position="144"/>
    </location>
    <ligand>
        <name>GTP</name>
        <dbReference type="ChEBI" id="CHEBI:37565"/>
    </ligand>
</feature>
<feature type="binding site" evidence="2">
    <location>
        <position position="145"/>
    </location>
    <ligand>
        <name>GTP</name>
        <dbReference type="ChEBI" id="CHEBI:37565"/>
    </ligand>
</feature>
<feature type="binding site" evidence="2">
    <location>
        <position position="179"/>
    </location>
    <ligand>
        <name>GTP</name>
        <dbReference type="ChEBI" id="CHEBI:37565"/>
    </ligand>
</feature>
<feature type="binding site" evidence="2">
    <location>
        <position position="206"/>
    </location>
    <ligand>
        <name>GTP</name>
        <dbReference type="ChEBI" id="CHEBI:37565"/>
    </ligand>
</feature>
<feature type="binding site" evidence="2">
    <location>
        <position position="228"/>
    </location>
    <ligand>
        <name>GTP</name>
        <dbReference type="ChEBI" id="CHEBI:37565"/>
    </ligand>
</feature>
<feature type="site" description="Involved in polymerization">
    <location>
        <position position="447"/>
    </location>
</feature>
<accession>O22348</accession>
<organism>
    <name type="scientific">Eleusine indica</name>
    <name type="common">Goosegrass</name>
    <name type="synonym">Cynosurus indicus</name>
    <dbReference type="NCBI Taxonomy" id="29674"/>
    <lineage>
        <taxon>Eukaryota</taxon>
        <taxon>Viridiplantae</taxon>
        <taxon>Streptophyta</taxon>
        <taxon>Embryophyta</taxon>
        <taxon>Tracheophyta</taxon>
        <taxon>Spermatophyta</taxon>
        <taxon>Magnoliopsida</taxon>
        <taxon>Liliopsida</taxon>
        <taxon>Poales</taxon>
        <taxon>Poaceae</taxon>
        <taxon>PACMAD clade</taxon>
        <taxon>Chloridoideae</taxon>
        <taxon>Cynodonteae</taxon>
        <taxon>Eleusininae</taxon>
        <taxon>Eleusine</taxon>
    </lineage>
</organism>
<proteinExistence type="evidence at transcript level"/>
<dbReference type="EC" id="3.6.5.-" evidence="2"/>
<dbReference type="EMBL" id="AF008121">
    <property type="protein sequence ID" value="AAC05718.1"/>
    <property type="molecule type" value="mRNA"/>
</dbReference>
<dbReference type="SMR" id="O22348"/>
<dbReference type="GO" id="GO:0005737">
    <property type="term" value="C:cytoplasm"/>
    <property type="evidence" value="ECO:0007669"/>
    <property type="project" value="UniProtKB-KW"/>
</dbReference>
<dbReference type="GO" id="GO:0005874">
    <property type="term" value="C:microtubule"/>
    <property type="evidence" value="ECO:0007669"/>
    <property type="project" value="UniProtKB-KW"/>
</dbReference>
<dbReference type="GO" id="GO:0005525">
    <property type="term" value="F:GTP binding"/>
    <property type="evidence" value="ECO:0007669"/>
    <property type="project" value="UniProtKB-KW"/>
</dbReference>
<dbReference type="GO" id="GO:0016787">
    <property type="term" value="F:hydrolase activity"/>
    <property type="evidence" value="ECO:0007669"/>
    <property type="project" value="UniProtKB-KW"/>
</dbReference>
<dbReference type="GO" id="GO:0046872">
    <property type="term" value="F:metal ion binding"/>
    <property type="evidence" value="ECO:0007669"/>
    <property type="project" value="UniProtKB-KW"/>
</dbReference>
<dbReference type="GO" id="GO:0005200">
    <property type="term" value="F:structural constituent of cytoskeleton"/>
    <property type="evidence" value="ECO:0007669"/>
    <property type="project" value="InterPro"/>
</dbReference>
<dbReference type="GO" id="GO:0007017">
    <property type="term" value="P:microtubule-based process"/>
    <property type="evidence" value="ECO:0007669"/>
    <property type="project" value="InterPro"/>
</dbReference>
<dbReference type="CDD" id="cd02186">
    <property type="entry name" value="alpha_tubulin"/>
    <property type="match status" value="1"/>
</dbReference>
<dbReference type="FunFam" id="1.10.287.600:FF:000005">
    <property type="entry name" value="Tubulin alpha chain"/>
    <property type="match status" value="1"/>
</dbReference>
<dbReference type="FunFam" id="3.30.1330.20:FF:000001">
    <property type="entry name" value="Tubulin alpha chain"/>
    <property type="match status" value="1"/>
</dbReference>
<dbReference type="FunFam" id="3.40.50.1440:FF:000004">
    <property type="entry name" value="Tubulin alpha chain"/>
    <property type="match status" value="1"/>
</dbReference>
<dbReference type="Gene3D" id="1.10.287.600">
    <property type="entry name" value="Helix hairpin bin"/>
    <property type="match status" value="1"/>
</dbReference>
<dbReference type="Gene3D" id="3.30.1330.20">
    <property type="entry name" value="Tubulin/FtsZ, C-terminal domain"/>
    <property type="match status" value="1"/>
</dbReference>
<dbReference type="Gene3D" id="3.40.50.1440">
    <property type="entry name" value="Tubulin/FtsZ, GTPase domain"/>
    <property type="match status" value="1"/>
</dbReference>
<dbReference type="InterPro" id="IPR002452">
    <property type="entry name" value="Alpha_tubulin"/>
</dbReference>
<dbReference type="InterPro" id="IPR013838">
    <property type="entry name" value="Beta-tubulin_BS"/>
</dbReference>
<dbReference type="InterPro" id="IPR008280">
    <property type="entry name" value="Tub_FtsZ_C"/>
</dbReference>
<dbReference type="InterPro" id="IPR000217">
    <property type="entry name" value="Tubulin"/>
</dbReference>
<dbReference type="InterPro" id="IPR037103">
    <property type="entry name" value="Tubulin/FtsZ-like_C"/>
</dbReference>
<dbReference type="InterPro" id="IPR018316">
    <property type="entry name" value="Tubulin/FtsZ_2-layer-sand-dom"/>
</dbReference>
<dbReference type="InterPro" id="IPR036525">
    <property type="entry name" value="Tubulin/FtsZ_GTPase_sf"/>
</dbReference>
<dbReference type="InterPro" id="IPR023123">
    <property type="entry name" value="Tubulin_C"/>
</dbReference>
<dbReference type="InterPro" id="IPR017975">
    <property type="entry name" value="Tubulin_CS"/>
</dbReference>
<dbReference type="InterPro" id="IPR003008">
    <property type="entry name" value="Tubulin_FtsZ_GTPase"/>
</dbReference>
<dbReference type="PANTHER" id="PTHR11588">
    <property type="entry name" value="TUBULIN"/>
    <property type="match status" value="1"/>
</dbReference>
<dbReference type="Pfam" id="PF00091">
    <property type="entry name" value="Tubulin"/>
    <property type="match status" value="1"/>
</dbReference>
<dbReference type="Pfam" id="PF03953">
    <property type="entry name" value="Tubulin_C"/>
    <property type="match status" value="1"/>
</dbReference>
<dbReference type="PRINTS" id="PR01162">
    <property type="entry name" value="ALPHATUBULIN"/>
</dbReference>
<dbReference type="PRINTS" id="PR01161">
    <property type="entry name" value="TUBULIN"/>
</dbReference>
<dbReference type="SMART" id="SM00864">
    <property type="entry name" value="Tubulin"/>
    <property type="match status" value="1"/>
</dbReference>
<dbReference type="SMART" id="SM00865">
    <property type="entry name" value="Tubulin_C"/>
    <property type="match status" value="1"/>
</dbReference>
<dbReference type="SUPFAM" id="SSF55307">
    <property type="entry name" value="Tubulin C-terminal domain-like"/>
    <property type="match status" value="1"/>
</dbReference>
<dbReference type="SUPFAM" id="SSF52490">
    <property type="entry name" value="Tubulin nucleotide-binding domain-like"/>
    <property type="match status" value="1"/>
</dbReference>
<dbReference type="PROSITE" id="PS00227">
    <property type="entry name" value="TUBULIN"/>
    <property type="match status" value="1"/>
</dbReference>
<reference key="1">
    <citation type="journal article" date="1998" name="Plant Cell">
        <title>Alpha-tubulin missense mutations correlate with antimicrotubule drug resistance in Eleusine indica.</title>
        <authorList>
            <person name="Yamamoto E."/>
            <person name="Zeng L."/>
            <person name="Baird W.V."/>
        </authorList>
    </citation>
    <scope>NUCLEOTIDE SEQUENCE [MRNA]</scope>
    <source>
        <tissue>Leaf</tissue>
    </source>
</reference>
<gene>
    <name type="primary">TUBA2</name>
    <name type="synonym">TUA2</name>
</gene>
<keyword id="KW-0963">Cytoplasm</keyword>
<keyword id="KW-0206">Cytoskeleton</keyword>
<keyword id="KW-0342">GTP-binding</keyword>
<keyword id="KW-0378">Hydrolase</keyword>
<keyword id="KW-0460">Magnesium</keyword>
<keyword id="KW-0479">Metal-binding</keyword>
<keyword id="KW-0493">Microtubule</keyword>
<keyword id="KW-0547">Nucleotide-binding</keyword>
<comment type="function">
    <text>Tubulin is the major constituent of microtubules, a cylinder consisting of laterally associated linear protofilaments composed of alpha- and beta-tubulin heterodimers. Microtubules grow by the addition of GTP-tubulin dimers to the microtubule end, where a stabilizing cap forms. Below the cap, tubulin dimers are in GDP-bound state, owing to GTPase activity of alpha-tubulin.</text>
</comment>
<comment type="catalytic activity">
    <reaction evidence="2">
        <text>GTP + H2O = GDP + phosphate + H(+)</text>
        <dbReference type="Rhea" id="RHEA:19669"/>
        <dbReference type="ChEBI" id="CHEBI:15377"/>
        <dbReference type="ChEBI" id="CHEBI:15378"/>
        <dbReference type="ChEBI" id="CHEBI:37565"/>
        <dbReference type="ChEBI" id="CHEBI:43474"/>
        <dbReference type="ChEBI" id="CHEBI:58189"/>
    </reaction>
    <physiologicalReaction direction="left-to-right" evidence="2">
        <dbReference type="Rhea" id="RHEA:19670"/>
    </physiologicalReaction>
</comment>
<comment type="cofactor">
    <cofactor evidence="2">
        <name>Mg(2+)</name>
        <dbReference type="ChEBI" id="CHEBI:18420"/>
    </cofactor>
</comment>
<comment type="subunit">
    <text>Dimer of alpha and beta chains. A typical microtubule is a hollow water-filled tube with an outer diameter of 25 nm and an inner diameter of 15 nM. Alpha-beta heterodimers associate head-to-tail to form protofilaments running lengthwise along the microtubule wall with the beta-tubulin subunit facing the microtubule plus end conferring a structural polarity. Microtubules usually have 13 protofilaments but different protofilament numbers can be found in some organisms and specialized cells.</text>
</comment>
<comment type="subcellular location">
    <subcellularLocation>
        <location>Cytoplasm</location>
        <location>Cytoskeleton</location>
    </subcellularLocation>
</comment>
<comment type="PTM">
    <text evidence="1">Undergoes a tyrosination/detyrosination cycle, the cyclic removal and re-addition of a C-terminal tyrosine residue by the enzymes tubulin tyrosine carboxypeptidase (TTCP) and tubulin tyrosine ligase (TTL), respectively.</text>
</comment>
<comment type="similarity">
    <text evidence="3">Belongs to the tubulin family.</text>
</comment>
<name>TBA2_ELEIN</name>